<proteinExistence type="inferred from homology"/>
<evidence type="ECO:0000255" key="1">
    <source>
        <dbReference type="HAMAP-Rule" id="MF_01333"/>
    </source>
</evidence>
<evidence type="ECO:0000305" key="2"/>
<gene>
    <name evidence="1" type="primary">rplE</name>
    <name type="ordered locus">Nham_1557</name>
</gene>
<comment type="function">
    <text evidence="1">This is one of the proteins that bind and probably mediate the attachment of the 5S RNA into the large ribosomal subunit, where it forms part of the central protuberance. In the 70S ribosome it contacts protein S13 of the 30S subunit (bridge B1b), connecting the 2 subunits; this bridge is implicated in subunit movement. Contacts the P site tRNA; the 5S rRNA and some of its associated proteins might help stabilize positioning of ribosome-bound tRNAs.</text>
</comment>
<comment type="subunit">
    <text evidence="1">Part of the 50S ribosomal subunit; part of the 5S rRNA/L5/L18/L25 subcomplex. Contacts the 5S rRNA and the P site tRNA. Forms a bridge to the 30S subunit in the 70S ribosome.</text>
</comment>
<comment type="similarity">
    <text evidence="1">Belongs to the universal ribosomal protein uL5 family.</text>
</comment>
<dbReference type="EMBL" id="CP000319">
    <property type="protein sequence ID" value="ABE62379.1"/>
    <property type="molecule type" value="Genomic_DNA"/>
</dbReference>
<dbReference type="RefSeq" id="WP_011510065.1">
    <property type="nucleotide sequence ID" value="NC_007964.1"/>
</dbReference>
<dbReference type="SMR" id="Q1QN18"/>
<dbReference type="STRING" id="323097.Nham_1557"/>
<dbReference type="KEGG" id="nha:Nham_1557"/>
<dbReference type="eggNOG" id="COG0094">
    <property type="taxonomic scope" value="Bacteria"/>
</dbReference>
<dbReference type="HOGENOM" id="CLU_061015_2_1_5"/>
<dbReference type="OrthoDB" id="9806626at2"/>
<dbReference type="Proteomes" id="UP000001953">
    <property type="component" value="Chromosome"/>
</dbReference>
<dbReference type="GO" id="GO:1990904">
    <property type="term" value="C:ribonucleoprotein complex"/>
    <property type="evidence" value="ECO:0007669"/>
    <property type="project" value="UniProtKB-KW"/>
</dbReference>
<dbReference type="GO" id="GO:0005840">
    <property type="term" value="C:ribosome"/>
    <property type="evidence" value="ECO:0007669"/>
    <property type="project" value="UniProtKB-KW"/>
</dbReference>
<dbReference type="GO" id="GO:0019843">
    <property type="term" value="F:rRNA binding"/>
    <property type="evidence" value="ECO:0007669"/>
    <property type="project" value="UniProtKB-UniRule"/>
</dbReference>
<dbReference type="GO" id="GO:0003735">
    <property type="term" value="F:structural constituent of ribosome"/>
    <property type="evidence" value="ECO:0007669"/>
    <property type="project" value="InterPro"/>
</dbReference>
<dbReference type="GO" id="GO:0000049">
    <property type="term" value="F:tRNA binding"/>
    <property type="evidence" value="ECO:0007669"/>
    <property type="project" value="UniProtKB-UniRule"/>
</dbReference>
<dbReference type="GO" id="GO:0006412">
    <property type="term" value="P:translation"/>
    <property type="evidence" value="ECO:0007669"/>
    <property type="project" value="UniProtKB-UniRule"/>
</dbReference>
<dbReference type="FunFam" id="3.30.1440.10:FF:000001">
    <property type="entry name" value="50S ribosomal protein L5"/>
    <property type="match status" value="1"/>
</dbReference>
<dbReference type="Gene3D" id="3.30.1440.10">
    <property type="match status" value="1"/>
</dbReference>
<dbReference type="HAMAP" id="MF_01333_B">
    <property type="entry name" value="Ribosomal_uL5_B"/>
    <property type="match status" value="1"/>
</dbReference>
<dbReference type="InterPro" id="IPR002132">
    <property type="entry name" value="Ribosomal_uL5"/>
</dbReference>
<dbReference type="InterPro" id="IPR020930">
    <property type="entry name" value="Ribosomal_uL5_bac-type"/>
</dbReference>
<dbReference type="InterPro" id="IPR031309">
    <property type="entry name" value="Ribosomal_uL5_C"/>
</dbReference>
<dbReference type="InterPro" id="IPR020929">
    <property type="entry name" value="Ribosomal_uL5_CS"/>
</dbReference>
<dbReference type="InterPro" id="IPR022803">
    <property type="entry name" value="Ribosomal_uL5_dom_sf"/>
</dbReference>
<dbReference type="InterPro" id="IPR031310">
    <property type="entry name" value="Ribosomal_uL5_N"/>
</dbReference>
<dbReference type="NCBIfam" id="NF000585">
    <property type="entry name" value="PRK00010.1"/>
    <property type="match status" value="1"/>
</dbReference>
<dbReference type="PANTHER" id="PTHR11994">
    <property type="entry name" value="60S RIBOSOMAL PROTEIN L11-RELATED"/>
    <property type="match status" value="1"/>
</dbReference>
<dbReference type="Pfam" id="PF00281">
    <property type="entry name" value="Ribosomal_L5"/>
    <property type="match status" value="1"/>
</dbReference>
<dbReference type="Pfam" id="PF00673">
    <property type="entry name" value="Ribosomal_L5_C"/>
    <property type="match status" value="1"/>
</dbReference>
<dbReference type="PIRSF" id="PIRSF002161">
    <property type="entry name" value="Ribosomal_L5"/>
    <property type="match status" value="1"/>
</dbReference>
<dbReference type="SUPFAM" id="SSF55282">
    <property type="entry name" value="RL5-like"/>
    <property type="match status" value="1"/>
</dbReference>
<dbReference type="PROSITE" id="PS00358">
    <property type="entry name" value="RIBOSOMAL_L5"/>
    <property type="match status" value="1"/>
</dbReference>
<accession>Q1QN18</accession>
<sequence length="185" mass="20802">MAETAYVPRLRVEYDKSIRTKLTEQFGYVNVMEVPRLDKVVLNMGIGEAVNDRKKAETAAGDLSLIAGQKALVTYSRVAISTFKLRENQPIGCKVTLRKAKMYEFIDRLINVALPRVRDFRGLNPKSFDGGGNYSLGIKEHIIFPEIDFDKAGESWGMDVTVCTTAQTDDEARALLTAFNFPFRQ</sequence>
<feature type="chain" id="PRO_1000052784" description="Large ribosomal subunit protein uL5">
    <location>
        <begin position="1"/>
        <end position="185"/>
    </location>
</feature>
<name>RL5_NITHX</name>
<keyword id="KW-1185">Reference proteome</keyword>
<keyword id="KW-0687">Ribonucleoprotein</keyword>
<keyword id="KW-0689">Ribosomal protein</keyword>
<keyword id="KW-0694">RNA-binding</keyword>
<keyword id="KW-0699">rRNA-binding</keyword>
<keyword id="KW-0820">tRNA-binding</keyword>
<organism>
    <name type="scientific">Nitrobacter hamburgensis (strain DSM 10229 / NCIMB 13809 / X14)</name>
    <dbReference type="NCBI Taxonomy" id="323097"/>
    <lineage>
        <taxon>Bacteria</taxon>
        <taxon>Pseudomonadati</taxon>
        <taxon>Pseudomonadota</taxon>
        <taxon>Alphaproteobacteria</taxon>
        <taxon>Hyphomicrobiales</taxon>
        <taxon>Nitrobacteraceae</taxon>
        <taxon>Nitrobacter</taxon>
    </lineage>
</organism>
<protein>
    <recommendedName>
        <fullName evidence="1">Large ribosomal subunit protein uL5</fullName>
    </recommendedName>
    <alternativeName>
        <fullName evidence="2">50S ribosomal protein L5</fullName>
    </alternativeName>
</protein>
<reference key="1">
    <citation type="submission" date="2006-03" db="EMBL/GenBank/DDBJ databases">
        <title>Complete sequence of chromosome of Nitrobacter hamburgensis X14.</title>
        <authorList>
            <consortium name="US DOE Joint Genome Institute"/>
            <person name="Copeland A."/>
            <person name="Lucas S."/>
            <person name="Lapidus A."/>
            <person name="Barry K."/>
            <person name="Detter J.C."/>
            <person name="Glavina del Rio T."/>
            <person name="Hammon N."/>
            <person name="Israni S."/>
            <person name="Dalin E."/>
            <person name="Tice H."/>
            <person name="Pitluck S."/>
            <person name="Chain P."/>
            <person name="Malfatti S."/>
            <person name="Shin M."/>
            <person name="Vergez L."/>
            <person name="Schmutz J."/>
            <person name="Larimer F."/>
            <person name="Land M."/>
            <person name="Hauser L."/>
            <person name="Kyrpides N."/>
            <person name="Ivanova N."/>
            <person name="Ward B."/>
            <person name="Arp D."/>
            <person name="Klotz M."/>
            <person name="Stein L."/>
            <person name="O'Mullan G."/>
            <person name="Starkenburg S."/>
            <person name="Sayavedra L."/>
            <person name="Poret-Peterson A.T."/>
            <person name="Gentry M.E."/>
            <person name="Bruce D."/>
            <person name="Richardson P."/>
        </authorList>
    </citation>
    <scope>NUCLEOTIDE SEQUENCE [LARGE SCALE GENOMIC DNA]</scope>
    <source>
        <strain>DSM 10229 / NCIMB 13809 / X14</strain>
    </source>
</reference>